<sequence>MLSMFMCNNIVDYVDGIVQDIEDEASNNVDHDYVYPLPENMVYRFDKSTNILDYLSTERDHVMMAVRYYMSKQRLDDLYRQLPTKTRSYIDIINIYCDKVSNDYNRDMNIMYDMASTKSFTVYDINNEVNTILMDNKGLGVRLATISFITELGRRCMNPVKTIKMFTLLSHTICDDCFVDYITDISPPDNTIPNTSTREYLKLIGITAIMFATYKTLKYMIG</sequence>
<accession>O57173</accession>
<comment type="function">
    <text evidence="1">Plays a role in evading host innate immune response by inhibiting host inflammasome activation. Interacts with and inhibits NLR-mediated interleukin-1 beta/IL1B production in infected cells. At the host mitochondria outer membrane, interacts with the BH3 domain of host BAK and prevents BAK from binding active BAX. In turn, host apoptosis is inhibited.</text>
</comment>
<comment type="subunit">
    <text evidence="1 2">Homodimer. Interacts with host pro-apoptotic protein BCL2L11 (via BH3 domain) (PubMed:18551131). Interacts with host NLRP1 (By similarity). Interacts with host BAK (By similarity).</text>
</comment>
<comment type="subcellular location">
    <subcellularLocation>
        <location evidence="1">Host mitochondrion outer membrane</location>
    </subcellularLocation>
    <subcellularLocation>
        <location evidence="1">Host cytoplasm</location>
    </subcellularLocation>
</comment>
<comment type="induction">
    <text evidence="1">Expressed in the early phase of the viral replicative cycle.</text>
</comment>
<comment type="similarity">
    <text evidence="3">Belongs to the orthopoxvirus OPG045 family.</text>
</comment>
<proteinExistence type="evidence at protein level"/>
<organismHost>
    <name type="scientific">Homo sapiens</name>
    <name type="common">Human</name>
    <dbReference type="NCBI Taxonomy" id="9606"/>
</organismHost>
<gene>
    <name type="primary">OPG045</name>
    <name type="ordered locus">MVA029L</name>
    <name type="ordered locus">ACAM3000_MVA_029</name>
</gene>
<reference key="1">
    <citation type="journal article" date="1998" name="Virology">
        <title>The complete genomic sequence of the modified vaccinia Ankara strain: comparison with other orthopoxviruses.</title>
        <authorList>
            <person name="Antoine G."/>
            <person name="Scheiflinger F."/>
            <person name="Dorner F."/>
            <person name="Falkner F.G."/>
        </authorList>
    </citation>
    <scope>NUCLEOTIDE SEQUENCE [LARGE SCALE GENOMIC DNA]</scope>
</reference>
<reference key="2">
    <citation type="submission" date="2004-04" db="EMBL/GenBank/DDBJ databases">
        <authorList>
            <person name="Esposito J.J."/>
            <person name="Frace M."/>
            <person name="Sammons S.A."/>
            <person name="Olsen-Rasmussen M.S."/>
            <person name="Osborne J."/>
            <person name="Khristova M."/>
            <person name="Wohlhueter R.M."/>
        </authorList>
    </citation>
    <scope>NUCLEOTIDE SEQUENCE [LARGE SCALE GENOMIC DNA]</scope>
    <source>
        <strain>Isolate Acambis 3000</strain>
    </source>
</reference>
<reference key="3">
    <citation type="journal article" date="2008" name="Cell Death Differ.">
        <title>Vaccinia virus anti-apoptotic F1L is a novel Bcl-2-like domain-swapped dimer that binds a highly selective subset of BH3-containing death ligands.</title>
        <authorList>
            <person name="Kvansakul M."/>
            <person name="Yang H."/>
            <person name="Fairlie W.D."/>
            <person name="Czabotar P.E."/>
            <person name="Fischer S.F."/>
            <person name="Perugini M.A."/>
            <person name="Huang D.C."/>
            <person name="Colman P.M."/>
        </authorList>
    </citation>
    <scope>SUBUNIT</scope>
    <scope>INTERACTION WITH HOST BCL2L11/BIM</scope>
    <scope>MUTAGENESIS OF VAL-100; ILE-125; VAL-129; GLY-140; VAL-141; ALA-144 AND PHE-148</scope>
    <scope>X-RAY CRYSTALLOGRAPHY (2.1 ANGSTROMS) OF 18-186</scope>
</reference>
<protein>
    <recommendedName>
        <fullName>Apoptosis regulator OPG045</fullName>
    </recommendedName>
    <alternativeName>
        <fullName>Protein F1</fullName>
    </alternativeName>
</protein>
<evidence type="ECO:0000250" key="1">
    <source>
        <dbReference type="UniProtKB" id="P24356"/>
    </source>
</evidence>
<evidence type="ECO:0000269" key="2">
    <source>
    </source>
</evidence>
<evidence type="ECO:0000305" key="3"/>
<evidence type="ECO:0007829" key="4">
    <source>
        <dbReference type="PDB" id="2VTY"/>
    </source>
</evidence>
<evidence type="ECO:0007829" key="5">
    <source>
        <dbReference type="PDB" id="4D2M"/>
    </source>
</evidence>
<keyword id="KW-0002">3D-structure</keyword>
<keyword id="KW-1035">Host cytoplasm</keyword>
<keyword id="KW-1043">Host membrane</keyword>
<keyword id="KW-1045">Host mitochondrion</keyword>
<keyword id="KW-1047">Host mitochondrion outer membrane</keyword>
<keyword id="KW-0945">Host-virus interaction</keyword>
<keyword id="KW-1081">Inhibition of host apoptosis by viral BCL2-like protein</keyword>
<keyword id="KW-0472">Membrane</keyword>
<keyword id="KW-1119">Modulation of host cell apoptosis by virus</keyword>
<name>PG045_VACCA</name>
<dbReference type="EMBL" id="U94848">
    <property type="protein sequence ID" value="AAB96412.1"/>
    <property type="molecule type" value="Genomic_DNA"/>
</dbReference>
<dbReference type="EMBL" id="AY603355">
    <property type="protein sequence ID" value="AAT10427.1"/>
    <property type="molecule type" value="Genomic_DNA"/>
</dbReference>
<dbReference type="PIR" id="T30779">
    <property type="entry name" value="T30779"/>
</dbReference>
<dbReference type="PDB" id="2VTY">
    <property type="method" value="X-ray"/>
    <property type="resolution" value="2.10 A"/>
    <property type="chains" value="A=18-186"/>
</dbReference>
<dbReference type="PDB" id="4D2L">
    <property type="method" value="X-ray"/>
    <property type="resolution" value="2.90 A"/>
    <property type="chains" value="A=18-186"/>
</dbReference>
<dbReference type="PDB" id="4D2M">
    <property type="method" value="X-ray"/>
    <property type="resolution" value="2.10 A"/>
    <property type="chains" value="A/C=18-186"/>
</dbReference>
<dbReference type="PDBsum" id="2VTY"/>
<dbReference type="PDBsum" id="4D2L"/>
<dbReference type="PDBsum" id="4D2M"/>
<dbReference type="SASBDB" id="O57173"/>
<dbReference type="SMR" id="O57173"/>
<dbReference type="MEROPS" id="I91.001"/>
<dbReference type="EvolutionaryTrace" id="O57173"/>
<dbReference type="Proteomes" id="UP000159908">
    <property type="component" value="Segment"/>
</dbReference>
<dbReference type="Proteomes" id="UP000172909">
    <property type="component" value="Segment"/>
</dbReference>
<dbReference type="GO" id="GO:0044193">
    <property type="term" value="C:host cell mitochondrial outer membrane"/>
    <property type="evidence" value="ECO:0007669"/>
    <property type="project" value="UniProtKB-SubCell"/>
</dbReference>
<dbReference type="GO" id="GO:0016020">
    <property type="term" value="C:membrane"/>
    <property type="evidence" value="ECO:0007669"/>
    <property type="project" value="UniProtKB-KW"/>
</dbReference>
<dbReference type="GO" id="GO:0042981">
    <property type="term" value="P:regulation of apoptotic process"/>
    <property type="evidence" value="ECO:0007669"/>
    <property type="project" value="InterPro"/>
</dbReference>
<dbReference type="GO" id="GO:0033668">
    <property type="term" value="P:symbiont-mediated suppression of host apoptosis"/>
    <property type="evidence" value="ECO:0007669"/>
    <property type="project" value="UniProtKB-KW"/>
</dbReference>
<dbReference type="DisProt" id="DP01539"/>
<dbReference type="FunFam" id="1.10.437.10:FF:000013">
    <property type="entry name" value="Protein F1"/>
    <property type="match status" value="1"/>
</dbReference>
<dbReference type="Gene3D" id="1.10.437.10">
    <property type="entry name" value="Blc2-like"/>
    <property type="match status" value="1"/>
</dbReference>
<dbReference type="InterPro" id="IPR036834">
    <property type="entry name" value="Bcl-2-like_sf"/>
</dbReference>
<dbReference type="InterPro" id="IPR011207">
    <property type="entry name" value="Orthopox_F1"/>
</dbReference>
<dbReference type="InterPro" id="IPR021119">
    <property type="entry name" value="Poxvirus_F1/C10"/>
</dbReference>
<dbReference type="Pfam" id="PF11099">
    <property type="entry name" value="M11L"/>
    <property type="match status" value="1"/>
</dbReference>
<dbReference type="PIRSF" id="PIRSF015971">
    <property type="entry name" value="VAC_F1L"/>
    <property type="match status" value="1"/>
</dbReference>
<organism>
    <name type="scientific">Vaccinia virus (strain Ankara)</name>
    <name type="common">VACV</name>
    <dbReference type="NCBI Taxonomy" id="126794"/>
    <lineage>
        <taxon>Viruses</taxon>
        <taxon>Varidnaviria</taxon>
        <taxon>Bamfordvirae</taxon>
        <taxon>Nucleocytoviricota</taxon>
        <taxon>Pokkesviricetes</taxon>
        <taxon>Chitovirales</taxon>
        <taxon>Poxviridae</taxon>
        <taxon>Chordopoxvirinae</taxon>
        <taxon>Orthopoxvirus</taxon>
        <taxon>Vaccinia virus</taxon>
    </lineage>
</organism>
<feature type="chain" id="PRO_0000099472" description="Apoptosis regulator OPG045">
    <location>
        <begin position="1"/>
        <end position="222"/>
    </location>
</feature>
<feature type="mutagenesis site" description="Complete loss of binding to host BCL2L11." evidence="2">
    <original>V</original>
    <variation>A</variation>
    <location>
        <position position="100"/>
    </location>
</feature>
<feature type="mutagenesis site" description="No effect on the binding to host BCL2L11." evidence="2">
    <original>V</original>
    <variation>F</variation>
    <location>
        <position position="100"/>
    </location>
</feature>
<feature type="mutagenesis site" description="Complete loss of binding to host BCL2L11." evidence="2">
    <original>I</original>
    <variation>A</variation>
    <location>
        <position position="125"/>
    </location>
</feature>
<feature type="mutagenesis site" description="Increased binding to host BCL2L11." evidence="2">
    <original>I</original>
    <variation>A</variation>
    <location>
        <position position="125"/>
    </location>
</feature>
<feature type="mutagenesis site" description="No effect on the binding to host BCL2L11." evidence="2">
    <original>V</original>
    <variation>L</variation>
    <location>
        <position position="129"/>
    </location>
</feature>
<feature type="mutagenesis site" description="Complete loss of binding to host BCL2L11." evidence="2">
    <original>G</original>
    <variation>F</variation>
    <location>
        <position position="140"/>
    </location>
</feature>
<feature type="mutagenesis site" description="Increased binding to host BCL2L11." evidence="2">
    <original>V</original>
    <variation>F</variation>
    <location>
        <position position="141"/>
    </location>
</feature>
<feature type="mutagenesis site" description="No effect on the binding to host BCL2L11." evidence="2">
    <original>V</original>
    <variation>L</variation>
    <location>
        <position position="141"/>
    </location>
</feature>
<feature type="mutagenesis site" description="Increased binding to host BCL2L11." evidence="2">
    <original>A</original>
    <variation>F</variation>
    <location>
        <position position="144"/>
    </location>
</feature>
<feature type="mutagenesis site" description="Complete loss of binding to host BCL2L11." evidence="2">
    <original>F</original>
    <variation>A</variation>
    <variation>E</variation>
    <location>
        <position position="148"/>
    </location>
</feature>
<feature type="helix" evidence="4">
    <location>
        <begin position="39"/>
        <end position="48"/>
    </location>
</feature>
<feature type="helix" evidence="4">
    <location>
        <begin position="49"/>
        <end position="54"/>
    </location>
</feature>
<feature type="helix" evidence="4">
    <location>
        <begin position="58"/>
        <end position="81"/>
    </location>
</feature>
<feature type="helix" evidence="4">
    <location>
        <begin position="84"/>
        <end position="103"/>
    </location>
</feature>
<feature type="helix" evidence="5">
    <location>
        <begin position="105"/>
        <end position="115"/>
    </location>
</feature>
<feature type="strand" evidence="4">
    <location>
        <begin position="117"/>
        <end position="119"/>
    </location>
</feature>
<feature type="helix" evidence="4">
    <location>
        <begin position="122"/>
        <end position="135"/>
    </location>
</feature>
<feature type="helix" evidence="4">
    <location>
        <begin position="139"/>
        <end position="155"/>
    </location>
</feature>
<feature type="helix" evidence="4">
    <location>
        <begin position="159"/>
        <end position="173"/>
    </location>
</feature>
<feature type="helix" evidence="4">
    <location>
        <begin position="176"/>
        <end position="185"/>
    </location>
</feature>